<accession>Q07545</accession>
<dbReference type="EMBL" id="L07369">
    <property type="protein sequence ID" value="AAA51493.1"/>
    <property type="molecule type" value="Genomic_RNA"/>
</dbReference>
<dbReference type="SMR" id="Q07545"/>
<dbReference type="Proteomes" id="UP000169886">
    <property type="component" value="Genome"/>
</dbReference>
<dbReference type="GO" id="GO:0019029">
    <property type="term" value="C:helical viral capsid"/>
    <property type="evidence" value="ECO:0007669"/>
    <property type="project" value="UniProtKB-UniRule"/>
</dbReference>
<dbReference type="GO" id="GO:0043657">
    <property type="term" value="C:host cell"/>
    <property type="evidence" value="ECO:0007669"/>
    <property type="project" value="GOC"/>
</dbReference>
<dbReference type="GO" id="GO:0042025">
    <property type="term" value="C:host cell nucleus"/>
    <property type="evidence" value="ECO:0007669"/>
    <property type="project" value="UniProtKB-SubCell"/>
</dbReference>
<dbReference type="GO" id="GO:1990904">
    <property type="term" value="C:ribonucleoprotein complex"/>
    <property type="evidence" value="ECO:0007669"/>
    <property type="project" value="UniProtKB-KW"/>
</dbReference>
<dbReference type="GO" id="GO:0019013">
    <property type="term" value="C:viral nucleocapsid"/>
    <property type="evidence" value="ECO:0007669"/>
    <property type="project" value="UniProtKB-UniRule"/>
</dbReference>
<dbReference type="GO" id="GO:0003723">
    <property type="term" value="F:RNA binding"/>
    <property type="evidence" value="ECO:0007669"/>
    <property type="project" value="UniProtKB-UniRule"/>
</dbReference>
<dbReference type="GO" id="GO:0005198">
    <property type="term" value="F:structural molecule activity"/>
    <property type="evidence" value="ECO:0007669"/>
    <property type="project" value="UniProtKB-UniRule"/>
</dbReference>
<dbReference type="GO" id="GO:0046718">
    <property type="term" value="P:symbiont entry into host cell"/>
    <property type="evidence" value="ECO:0007669"/>
    <property type="project" value="UniProtKB-KW"/>
</dbReference>
<dbReference type="GO" id="GO:0075732">
    <property type="term" value="P:viral penetration into host nucleus"/>
    <property type="evidence" value="ECO:0007669"/>
    <property type="project" value="UniProtKB-UniRule"/>
</dbReference>
<dbReference type="HAMAP" id="MF_04070">
    <property type="entry name" value="INFV_NCAP"/>
    <property type="match status" value="1"/>
</dbReference>
<dbReference type="InterPro" id="IPR002141">
    <property type="entry name" value="Flu_NP"/>
</dbReference>
<dbReference type="Pfam" id="PF00506">
    <property type="entry name" value="Flu_NP"/>
    <property type="match status" value="1"/>
</dbReference>
<dbReference type="SUPFAM" id="SSF161003">
    <property type="entry name" value="flu NP-like"/>
    <property type="match status" value="1"/>
</dbReference>
<feature type="chain" id="PRO_0000079078" description="Nucleoprotein">
    <location>
        <begin position="1"/>
        <end position="498"/>
    </location>
</feature>
<feature type="region of interest" description="Disordered" evidence="2">
    <location>
        <begin position="1"/>
        <end position="21"/>
    </location>
</feature>
<feature type="short sequence motif" description="Unconventional nuclear localization signal" evidence="1">
    <location>
        <begin position="1"/>
        <end position="18"/>
    </location>
</feature>
<feature type="short sequence motif" description="Bipartite nuclear localization signal" evidence="1">
    <location>
        <begin position="198"/>
        <end position="216"/>
    </location>
</feature>
<feature type="compositionally biased region" description="Basic and acidic residues" evidence="2">
    <location>
        <begin position="8"/>
        <end position="21"/>
    </location>
</feature>
<name>NCAP_I88A2</name>
<proteinExistence type="inferred from homology"/>
<reference key="1">
    <citation type="journal article" date="1993" name="J. Virol.">
        <title>Analysis of the evolution and variation of the human influenza A virus nucleoprotein gene from 1933 to 1990.</title>
        <authorList>
            <person name="Shu L.L."/>
            <person name="Bean W.J."/>
            <person name="Webster R.G."/>
        </authorList>
    </citation>
    <scope>NUCLEOTIDE SEQUENCE [GENOMIC RNA]</scope>
</reference>
<keyword id="KW-0167">Capsid protein</keyword>
<keyword id="KW-1139">Helical capsid protein</keyword>
<keyword id="KW-1048">Host nucleus</keyword>
<keyword id="KW-0945">Host-virus interaction</keyword>
<keyword id="KW-0687">Ribonucleoprotein</keyword>
<keyword id="KW-0694">RNA-binding</keyword>
<keyword id="KW-0543">Viral nucleoprotein</keyword>
<keyword id="KW-1163">Viral penetration into host nucleus</keyword>
<keyword id="KW-0946">Virion</keyword>
<keyword id="KW-1160">Virus entry into host cell</keyword>
<evidence type="ECO:0000255" key="1">
    <source>
        <dbReference type="HAMAP-Rule" id="MF_04070"/>
    </source>
</evidence>
<evidence type="ECO:0000256" key="2">
    <source>
        <dbReference type="SAM" id="MobiDB-lite"/>
    </source>
</evidence>
<organismHost>
    <name type="scientific">Aves</name>
    <dbReference type="NCBI Taxonomy" id="8782"/>
</organismHost>
<organismHost>
    <name type="scientific">Cetacea</name>
    <name type="common">whales</name>
    <dbReference type="NCBI Taxonomy" id="9721"/>
</organismHost>
<organismHost>
    <name type="scientific">Homo sapiens</name>
    <name type="common">Human</name>
    <dbReference type="NCBI Taxonomy" id="9606"/>
</organismHost>
<organismHost>
    <name type="scientific">Phocidae</name>
    <name type="common">true seals</name>
    <dbReference type="NCBI Taxonomy" id="9709"/>
</organismHost>
<organismHost>
    <name type="scientific">Sus scrofa</name>
    <name type="common">Pig</name>
    <dbReference type="NCBI Taxonomy" id="9823"/>
</organismHost>
<organism>
    <name type="scientific">Influenza A virus (strain A/Memphis/3/1988 H3N2)</name>
    <dbReference type="NCBI Taxonomy" id="383589"/>
    <lineage>
        <taxon>Viruses</taxon>
        <taxon>Riboviria</taxon>
        <taxon>Orthornavirae</taxon>
        <taxon>Negarnaviricota</taxon>
        <taxon>Polyploviricotina</taxon>
        <taxon>Insthoviricetes</taxon>
        <taxon>Articulavirales</taxon>
        <taxon>Orthomyxoviridae</taxon>
        <taxon>Alphainfluenzavirus</taxon>
        <taxon>Alphainfluenzavirus influenzae</taxon>
        <taxon>Influenza A virus</taxon>
    </lineage>
</organism>
<gene>
    <name evidence="1" type="primary">NP</name>
</gene>
<sequence length="498" mass="56221">MASQGTKRSYEQMETDGERQNATEIRASVGKMIDGIGRFYIQMCTELKLSDYEGRLIQNSLTIERMVLSAFDERRNRYLEEHPSAGKDPKKTGGPIYKRVGGRWMRELVLYDKEEIRRIWRQANNGDDATRGLTHMMIWHSNLNDTTYQRTRALVRTGMDPRMCSLMQGSTLPRRSGAAGAAVKGIGTMVMELIRMIKRGINDRNFWRGENGRKTRSAYERMCNILKGKFQTAAQRAMMDQVRESRNPGNAEIEDLIFSARSALILRGSVAHKSCLPACVYGPAVSSGYDFEKEGYSLVGIDPFKLLQNSQVYSLIRPNENPAHKSQLVWMACHSAAFEDLRLLSFIRGTKVSPRGKLSTRGVQIASNENMDNMESSTLELRSRYWAIRTRSGGNTNQQRASAGQISVQPTFSVQRNLPFEKSTVMAAFTGNTEGRTSDMRAEIIRLMEGAKPEEVSFRGRGVFELSDEKATNPIVPSFDMSNEGSYFFGDNAEEYDN</sequence>
<comment type="function">
    <text evidence="1">Encapsidates the negative strand viral RNA, protecting it from nucleases. The encapsidated genomic RNA is termed the ribonucleoprotein (RNP) and serves as template for transcription and replication. The RNP needs to be localized in the host nucleus to start an infectious cycle, but is too large to diffuse through the nuclear pore complex. NP comprises at least 2 nuclear localization signals that are responsible for the active RNP import into the nucleus through cellular importin alpha/beta pathway. Later in the infection, nclear export of RNPs are mediated through viral proteins NEP interacting with M1 which binds nucleoproteins. It is possible that nucleoprotein binds directly host exportin-1/XPO1 and plays an active role in RNPs nuclear export. M1 interaction with RNP seems to hide nucleoprotein's nuclear localization signals. Soon after a virion infects a new cell, M1 dissociates from the RNP under acidification of the virion driven by M2 protein. Dissociation of M1 from RNP unmasks nucleoprotein's nuclear localization signals, targeting the RNP to the nucleus.</text>
</comment>
<comment type="subunit">
    <text evidence="1">Homomultimerizes to form the nucleocapsid. May bind host exportin-1/XPO1. Binds to viral genomic RNA. Protein-RNA contacts are mediated by a combination of electrostatic interactions between positively charged residues and the phosphate backbone and planar interactions between aromatic side chains and bases.</text>
</comment>
<comment type="subcellular location">
    <subcellularLocation>
        <location evidence="1">Virion</location>
    </subcellularLocation>
    <subcellularLocation>
        <location evidence="1">Host nucleus</location>
    </subcellularLocation>
</comment>
<comment type="PTM">
    <text evidence="1">Late in virus-infected cells, may be cleaved from a 56-kDa protein to a 53-kDa protein by a cellular caspase. This cleavage might be a marker for the onset of apoptosis in infected cells or have a specific function in virus host interaction.</text>
</comment>
<comment type="similarity">
    <text evidence="1">Belongs to the influenza viruses nucleoprotein family.</text>
</comment>
<protein>
    <recommendedName>
        <fullName evidence="1">Nucleoprotein</fullName>
    </recommendedName>
    <alternativeName>
        <fullName evidence="1">Nucleocapsid protein</fullName>
        <shortName evidence="1">Protein N</shortName>
    </alternativeName>
</protein>